<comment type="function">
    <text evidence="4 6 9 10 11 13 14 15 16 18 19">Component of the DASH complex that connects microtubules with kinetochores and couples microtubule depolymerisation to chromosome movement; it is involved in retrieving kinetochores to the spindle poles before their re-orientation on the spindle in early mitosis and allows microtubule depolymerization to pull chromosomes apart and resist detachment during anaphase (PubMed:15664196, PubMed:16415853, PubMed:16777964, PubMed:17460120, PubMed:17643123). Kinetochores, consisting of a centromere-associated inner segment and a microtubule-contacting outer segment, play a crucial role in chromosome segregation by mediating the physical connection between centromeric DNA and microtubules (PubMed:11782438). Kinetochores also serve as an input point for the spindle assembly checkpoint, which delays anaphase until all chromosomes have bioriented on the mitotic spindle (PubMed:11782438, PubMed:12408861). During spindle-kinetochore attachment, kinetochores first attach to the lateral surface of spindle microtubules, which supports the congression of chromosomes toward the middle of the dividing cell; they then slide along towards the spindle pole, a process independent of the DASH complex but requiring the NDC80 complex (PubMed:25236177). When the end of a disassembling microtubule reaches the laterally attached kinetochore, the DASH complex together with the NDC80 complex and STU2 convert lateral attachment to end-on capture to produce a structure that can track with microtubule shortening and sustain attachment when tension is applied across sister kinetochores upon their biorientation (PubMed:15640796, PubMed:15664196, PubMed:25236177). Microtubule depolymerization proceeds by protofilament splaying and induces the kinetochore-attached DASH complex to slide longitudinally, thereby helping to transduce depolymerization energy into pulling forces to disjoin chromatids (PubMed:16415853, PubMed:16777964). Incorrect microtubule attachments are corrected by releasing microubules from the kinetochore through phosphorylation by IPL1 of kinetochore components (PubMed:12408861). Links the microtubule cytoskeleton to chromosomes during interphase (PubMed:36701236). Also contributes to the poleward transport of kinetochores on microtubules following centromeric DNA replication in S-phase (PubMed:18079178).</text>
</comment>
<comment type="subunit">
    <text evidence="1 4 5 9 12 14 15 17 18">Component of the DASH complex consisting of ASK1, DAD1, DAD2, DAD3, DAD4, DAM1, DUO1, HSK3, SPC19 and SPC34, with a stoichiometry of one copy of each subunit per complex (PubMed:11782438, PubMed:11799062, PubMed:15640796, PubMed:16715078, PubMed:17460120, PubMed:17643123, PubMed:24930965, PubMed:25236177). Multiple DASH complexes oligomerize to form a ring that encircles spindle microtubules and organizes the rod-like NDC80 complexes of the outer kinetochore (PubMed:16715078, PubMed:17460120, PubMed:17643123, PubMed:25236177). DASH complex oligomerization strengthens microtubule attachments (PubMed:25236177). On cytoplasmic microtubules, DASH complexes appear to form patches instead of rings (By similarity).</text>
</comment>
<comment type="interaction">
    <interactant intactId="EBI-26515">
        <id>P36162</id>
    </interactant>
    <interactant intactId="EBI-26682">
        <id>P35734</id>
        <label>ASK1</label>
    </interactant>
    <organismsDiffer>false</organismsDiffer>
    <experiments>8</experiments>
</comment>
<comment type="subcellular location">
    <subcellularLocation>
        <location evidence="7">Nucleus</location>
    </subcellularLocation>
    <subcellularLocation>
        <location evidence="4 7">Cytoplasm</location>
        <location evidence="4 7">Cytoskeleton</location>
        <location evidence="4 7">Spindle</location>
    </subcellularLocation>
    <subcellularLocation>
        <location evidence="4 7">Chromosome</location>
        <location evidence="4 7">Centromere</location>
        <location evidence="4 7">Kinetochore</location>
    </subcellularLocation>
    <subcellularLocation>
        <location evidence="19">Chromosome</location>
    </subcellularLocation>
    <text evidence="7 19">Associates with the mitotic spindle and the kinetochore (PubMed:14562095). Associates with origin of replication (ORI) sites during interphase (PubMed:36701236).</text>
</comment>
<comment type="miscellaneous">
    <text evidence="8">Present with 279 molecules/cell in log phase SD medium.</text>
</comment>
<comment type="similarity">
    <text evidence="20">Belongs to the DASH complex DAD2 family.</text>
</comment>
<accession>P36162</accession>
<accession>D6VXE3</accession>
<keyword id="KW-0002">3D-structure</keyword>
<keyword id="KW-0007">Acetylation</keyword>
<keyword id="KW-0131">Cell cycle</keyword>
<keyword id="KW-0132">Cell division</keyword>
<keyword id="KW-0137">Centromere</keyword>
<keyword id="KW-0158">Chromosome</keyword>
<keyword id="KW-0159">Chromosome partition</keyword>
<keyword id="KW-0175">Coiled coil</keyword>
<keyword id="KW-0963">Cytoplasm</keyword>
<keyword id="KW-0206">Cytoskeleton</keyword>
<keyword id="KW-0995">Kinetochore</keyword>
<keyword id="KW-0493">Microtubule</keyword>
<keyword id="KW-0498">Mitosis</keyword>
<keyword id="KW-0539">Nucleus</keyword>
<keyword id="KW-1185">Reference proteome</keyword>
<evidence type="ECO:0000250" key="1">
    <source>
        <dbReference type="UniProtKB" id="Q9UTG8"/>
    </source>
</evidence>
<evidence type="ECO:0000255" key="2"/>
<evidence type="ECO:0000256" key="3">
    <source>
        <dbReference type="SAM" id="MobiDB-lite"/>
    </source>
</evidence>
<evidence type="ECO:0000269" key="4">
    <source>
    </source>
</evidence>
<evidence type="ECO:0000269" key="5">
    <source>
    </source>
</evidence>
<evidence type="ECO:0000269" key="6">
    <source>
    </source>
</evidence>
<evidence type="ECO:0000269" key="7">
    <source>
    </source>
</evidence>
<evidence type="ECO:0000269" key="8">
    <source>
    </source>
</evidence>
<evidence type="ECO:0000269" key="9">
    <source>
    </source>
</evidence>
<evidence type="ECO:0000269" key="10">
    <source>
    </source>
</evidence>
<evidence type="ECO:0000269" key="11">
    <source>
    </source>
</evidence>
<evidence type="ECO:0000269" key="12">
    <source>
    </source>
</evidence>
<evidence type="ECO:0000269" key="13">
    <source>
    </source>
</evidence>
<evidence type="ECO:0000269" key="14">
    <source>
    </source>
</evidence>
<evidence type="ECO:0000269" key="15">
    <source>
    </source>
</evidence>
<evidence type="ECO:0000269" key="16">
    <source>
    </source>
</evidence>
<evidence type="ECO:0000269" key="17">
    <source>
    </source>
</evidence>
<evidence type="ECO:0000269" key="18">
    <source>
    </source>
</evidence>
<evidence type="ECO:0000269" key="19">
    <source>
    </source>
</evidence>
<evidence type="ECO:0000305" key="20"/>
<evidence type="ECO:0007744" key="21">
    <source>
    </source>
</evidence>
<reference key="1">
    <citation type="journal article" date="1994" name="Yeast">
        <title>The complete sequence of an 18,002 bp segment of Saccharomyces cerevisiae chromosome XI contains the HBS1, MRP-L20 and PRP16 genes, and six new open reading frames.</title>
        <authorList>
            <person name="Garcia-Cantalejo J.M."/>
            <person name="Baladron V."/>
            <person name="Esteban P.F."/>
            <person name="Santos M.A."/>
            <person name="Bou G."/>
            <person name="Remacha M.A."/>
            <person name="Revuelta J.L."/>
            <person name="Ballesta J.P.G."/>
            <person name="Jimenez A."/>
            <person name="del Rey F."/>
        </authorList>
    </citation>
    <scope>NUCLEOTIDE SEQUENCE [LARGE SCALE GENOMIC DNA]</scope>
</reference>
<reference key="2">
    <citation type="journal article" date="2014" name="G3 (Bethesda)">
        <title>The reference genome sequence of Saccharomyces cerevisiae: Then and now.</title>
        <authorList>
            <person name="Engel S.R."/>
            <person name="Dietrich F.S."/>
            <person name="Fisk D.G."/>
            <person name="Binkley G."/>
            <person name="Balakrishnan R."/>
            <person name="Costanzo M.C."/>
            <person name="Dwight S.S."/>
            <person name="Hitz B.C."/>
            <person name="Karra K."/>
            <person name="Nash R.S."/>
            <person name="Weng S."/>
            <person name="Wong E.D."/>
            <person name="Lloyd P."/>
            <person name="Skrzypek M.S."/>
            <person name="Miyasato S.R."/>
            <person name="Simison M."/>
            <person name="Cherry J.M."/>
        </authorList>
    </citation>
    <scope>GENOME REANNOTATION</scope>
    <source>
        <strain>ATCC 204508 / S288c</strain>
    </source>
</reference>
<reference key="3">
    <citation type="journal article" date="1994" name="Nature">
        <title>Complete DNA sequence of yeast chromosome XI.</title>
        <authorList>
            <person name="Dujon B."/>
            <person name="Alexandraki D."/>
            <person name="Andre B."/>
            <person name="Ansorge W."/>
            <person name="Baladron V."/>
            <person name="Ballesta J.P.G."/>
            <person name="Banrevi A."/>
            <person name="Bolle P.-A."/>
            <person name="Bolotin-Fukuhara M."/>
            <person name="Bossier P."/>
            <person name="Bou G."/>
            <person name="Boyer J."/>
            <person name="Buitrago M.J."/>
            <person name="Cheret G."/>
            <person name="Colleaux L."/>
            <person name="Daignan-Fornier B."/>
            <person name="del Rey F."/>
            <person name="Dion C."/>
            <person name="Domdey H."/>
            <person name="Duesterhoeft A."/>
            <person name="Duesterhus S."/>
            <person name="Entian K.-D."/>
            <person name="Erfle H."/>
            <person name="Esteban P.F."/>
            <person name="Feldmann H."/>
            <person name="Fernandes L."/>
            <person name="Fobo G.M."/>
            <person name="Fritz C."/>
            <person name="Fukuhara H."/>
            <person name="Gabel C."/>
            <person name="Gaillon L."/>
            <person name="Garcia-Cantalejo J.M."/>
            <person name="Garcia-Ramirez J.J."/>
            <person name="Gent M.E."/>
            <person name="Ghazvini M."/>
            <person name="Goffeau A."/>
            <person name="Gonzalez A."/>
            <person name="Grothues D."/>
            <person name="Guerreiro P."/>
            <person name="Hegemann J.H."/>
            <person name="Hewitt N."/>
            <person name="Hilger F."/>
            <person name="Hollenberg C.P."/>
            <person name="Horaitis O."/>
            <person name="Indge K.J."/>
            <person name="Jacquier A."/>
            <person name="James C.M."/>
            <person name="Jauniaux J.-C."/>
            <person name="Jimenez A."/>
            <person name="Keuchel H."/>
            <person name="Kirchrath L."/>
            <person name="Kleine K."/>
            <person name="Koetter P."/>
            <person name="Legrain P."/>
            <person name="Liebl S."/>
            <person name="Louis E.J."/>
            <person name="Maia e Silva A."/>
            <person name="Marck C."/>
            <person name="Monnier A.-L."/>
            <person name="Moestl D."/>
            <person name="Mueller S."/>
            <person name="Obermaier B."/>
            <person name="Oliver S.G."/>
            <person name="Pallier C."/>
            <person name="Pascolo S."/>
            <person name="Pfeiffer F."/>
            <person name="Philippsen P."/>
            <person name="Planta R.J."/>
            <person name="Pohl F.M."/>
            <person name="Pohl T.M."/>
            <person name="Poehlmann R."/>
            <person name="Portetelle D."/>
            <person name="Purnelle B."/>
            <person name="Puzos V."/>
            <person name="Ramezani Rad M."/>
            <person name="Rasmussen S.W."/>
            <person name="Remacha M.A."/>
            <person name="Revuelta J.L."/>
            <person name="Richard G.-F."/>
            <person name="Rieger M."/>
            <person name="Rodrigues-Pousada C."/>
            <person name="Rose M."/>
            <person name="Rupp T."/>
            <person name="Santos M.A."/>
            <person name="Schwager C."/>
            <person name="Sensen C."/>
            <person name="Skala J."/>
            <person name="Soares H."/>
            <person name="Sor F."/>
            <person name="Stegemann J."/>
            <person name="Tettelin H."/>
            <person name="Thierry A."/>
            <person name="Tzermia M."/>
            <person name="Urrestarazu L.A."/>
            <person name="van Dyck L."/>
            <person name="van Vliet-Reedijk J.C."/>
            <person name="Valens M."/>
            <person name="Vandenbol M."/>
            <person name="Vilela C."/>
            <person name="Vissers S."/>
            <person name="von Wettstein D."/>
            <person name="Voss H."/>
            <person name="Wiemann S."/>
            <person name="Xu G."/>
            <person name="Zimmermann J."/>
            <person name="Haasemann M."/>
            <person name="Becker I."/>
            <person name="Mewes H.-W."/>
        </authorList>
    </citation>
    <scope>NUCLEOTIDE SEQUENCE [LARGE SCALE GENOMIC DNA]</scope>
    <source>
        <strain>ATCC 204508 / S288c</strain>
    </source>
</reference>
<reference key="4">
    <citation type="journal article" date="2007" name="Genome Res.">
        <title>Approaching a complete repository of sequence-verified protein-encoding clones for Saccharomyces cerevisiae.</title>
        <authorList>
            <person name="Hu Y."/>
            <person name="Rolfs A."/>
            <person name="Bhullar B."/>
            <person name="Murthy T.V.S."/>
            <person name="Zhu C."/>
            <person name="Berger M.F."/>
            <person name="Camargo A.A."/>
            <person name="Kelley F."/>
            <person name="McCarron S."/>
            <person name="Jepson D."/>
            <person name="Richardson A."/>
            <person name="Raphael J."/>
            <person name="Moreira D."/>
            <person name="Taycher E."/>
            <person name="Zuo D."/>
            <person name="Mohr S."/>
            <person name="Kane M.F."/>
            <person name="Williamson J."/>
            <person name="Simpson A.J.G."/>
            <person name="Bulyk M.L."/>
            <person name="Harlow E."/>
            <person name="Marsischky G."/>
            <person name="Kolodner R.D."/>
            <person name="LaBaer J."/>
        </authorList>
    </citation>
    <scope>NUCLEOTIDE SEQUENCE [GENOMIC DNA]</scope>
    <source>
        <strain>ATCC 204508 / S288c</strain>
    </source>
</reference>
<reference key="5">
    <citation type="journal article" date="2002" name="Cell">
        <title>Phospho-regulation of kinetochore-microtubule attachments by the Aurora kinase Ipl1p.</title>
        <authorList>
            <person name="Cheeseman I.M."/>
            <person name="Anderson S."/>
            <person name="Jwa M."/>
            <person name="Green E.M."/>
            <person name="Kang J.-S."/>
            <person name="Yates J.R. III"/>
            <person name="Chan C.S.M."/>
            <person name="Drubin D.G."/>
            <person name="Barnes G."/>
        </authorList>
    </citation>
    <scope>FUNCTION</scope>
</reference>
<reference key="6">
    <citation type="journal article" date="2002" name="EMBO J.">
        <title>Four new subunits of the Dam1-Duo1 complex reveal novel functions in sister kinetochore biorientation.</title>
        <authorList>
            <person name="Janke C."/>
            <person name="Ortiz J."/>
            <person name="Tanaka T.U."/>
            <person name="Lechner J."/>
            <person name="Schiebel E."/>
        </authorList>
    </citation>
    <scope>FUNCTION</scope>
    <scope>IDENTIFICATION IN THE DASH COMPLEX</scope>
    <scope>IDENTIFICATION BY MASS SPECTROMETRY</scope>
    <scope>SUBCELLULAR LOCATION</scope>
</reference>
<reference key="7">
    <citation type="journal article" date="2002" name="Genes Dev.">
        <title>The mitotic spindle is required for loading of the DASH complex onto the kinetochore.</title>
        <authorList>
            <person name="Li Y."/>
            <person name="Bachant J.B."/>
            <person name="Alcasabas A.A."/>
            <person name="Wang Y."/>
            <person name="Qin J."/>
            <person name="Elledge S.J."/>
        </authorList>
    </citation>
    <scope>IDENTIFICATION IN THE DASH COMPLEX</scope>
</reference>
<reference key="8">
    <citation type="journal article" date="2003" name="Nature">
        <title>Global analysis of protein localization in budding yeast.</title>
        <authorList>
            <person name="Huh W.-K."/>
            <person name="Falvo J.V."/>
            <person name="Gerke L.C."/>
            <person name="Carroll A.S."/>
            <person name="Howson R.W."/>
            <person name="Weissman J.S."/>
            <person name="O'Shea E.K."/>
        </authorList>
    </citation>
    <scope>SUBCELLULAR LOCATION [LARGE SCALE ANALYSIS]</scope>
</reference>
<reference key="9">
    <citation type="journal article" date="2003" name="Nature">
        <title>Global analysis of protein expression in yeast.</title>
        <authorList>
            <person name="Ghaemmaghami S."/>
            <person name="Huh W.-K."/>
            <person name="Bower K."/>
            <person name="Howson R.W."/>
            <person name="Belle A."/>
            <person name="Dephoure N."/>
            <person name="O'Shea E.K."/>
            <person name="Weissman J.S."/>
        </authorList>
    </citation>
    <scope>LEVEL OF PROTEIN EXPRESSION [LARGE SCALE ANALYSIS]</scope>
</reference>
<reference key="10">
    <citation type="journal article" date="2005" name="Mol. Cell">
        <title>Formation of a dynamic kinetochore-microtubule interface through assembly of the Dam1 ring complex.</title>
        <authorList>
            <person name="Westermann S."/>
            <person name="Avila-Sakar A."/>
            <person name="Wang H.-W."/>
            <person name="Niederstrasser H."/>
            <person name="Wong J."/>
            <person name="Drubin D.G."/>
            <person name="Nogales E."/>
            <person name="Barnes G."/>
        </authorList>
    </citation>
    <scope>FUNCTION</scope>
</reference>
<reference key="11">
    <citation type="journal article" date="2012" name="Proc. Natl. Acad. Sci. U.S.A.">
        <title>N-terminal acetylome analyses and functional insights of the N-terminal acetyltransferase NatB.</title>
        <authorList>
            <person name="Van Damme P."/>
            <person name="Lasa M."/>
            <person name="Polevoda B."/>
            <person name="Gazquez C."/>
            <person name="Elosegui-Artola A."/>
            <person name="Kim D.S."/>
            <person name="De Juan-Pardo E."/>
            <person name="Demeyer K."/>
            <person name="Hole K."/>
            <person name="Larrea E."/>
            <person name="Timmerman E."/>
            <person name="Prieto J."/>
            <person name="Arnesen T."/>
            <person name="Sherman F."/>
            <person name="Gevaert K."/>
            <person name="Aldabe R."/>
        </authorList>
    </citation>
    <scope>ACETYLATION [LARGE SCALE ANALYSIS] AT MET-1</scope>
    <scope>IDENTIFICATION BY MASS SPECTROMETRY [LARGE SCALE ANALYSIS]</scope>
</reference>
<reference key="12">
    <citation type="journal article" date="2006" name="Nature">
        <title>The Dam1 kinetochore ring complex moves processively on depolymerizing microtubule ends.</title>
        <authorList>
            <person name="Westermann S."/>
            <person name="Wang H.-W."/>
            <person name="Avila-Sakar A."/>
            <person name="Drubin D.G."/>
            <person name="Nogales E."/>
            <person name="Barnes G."/>
        </authorList>
    </citation>
    <scope>FUNCTION</scope>
</reference>
<reference key="13">
    <citation type="journal article" date="2006" name="Nat. Cell Biol.">
        <title>Molecular architecture of a kinetochore-microtubule attachment site.</title>
        <authorList>
            <person name="Joglekar A.P."/>
            <person name="Bouck D.C."/>
            <person name="Molk J.N."/>
            <person name="Bloom K.S."/>
            <person name="Salmon E.D."/>
        </authorList>
    </citation>
    <scope>SUBUNIT</scope>
</reference>
<reference key="14">
    <citation type="journal article" date="2006" name="Proc. Natl. Acad. Sci. U.S.A.">
        <title>The Dam1 kinetochore complex harnesses microtubule dynamics to produce force and movement.</title>
        <authorList>
            <person name="Asbury C.L."/>
            <person name="Gestaut D.R."/>
            <person name="Powers A.F."/>
            <person name="Franck A.D."/>
            <person name="Davis T.N."/>
        </authorList>
    </citation>
    <scope>FUNCTION</scope>
</reference>
<reference key="15">
    <citation type="journal article" date="2007" name="Genes Dev.">
        <title>Kinetochore microtubule interaction during S phase in Saccharomyces cerevisiae.</title>
        <authorList>
            <person name="Kitamura E."/>
            <person name="Tanaka K."/>
            <person name="Kitamura Y."/>
            <person name="Tanaka T.U."/>
        </authorList>
    </citation>
    <scope>FUNCTION</scope>
</reference>
<reference key="16">
    <citation type="journal article" date="2007" name="Mol. Biol. Cell">
        <title>Protein arms in the kinetochore-microtubule interface of the yeast DASH complex.</title>
        <authorList>
            <person name="Miranda J.J."/>
            <person name="King D.S."/>
            <person name="Harrison S.C."/>
        </authorList>
    </citation>
    <scope>FUNCTION</scope>
    <scope>IDENTIFICATION IN THE DASH COMPLEX</scope>
</reference>
<reference key="17">
    <citation type="journal article" date="2014" name="Curr. Biol.">
        <title>Assembling the protein architecture of the budding yeast kinetochore-microtubule attachment using FRET.</title>
        <authorList>
            <person name="Aravamudhan P."/>
            <person name="Felzer-Kim I."/>
            <person name="Gurunathan K."/>
            <person name="Joglekar A.P."/>
        </authorList>
    </citation>
    <scope>IDENTIFICATION IN THE DASH COMPLEX</scope>
</reference>
<reference key="18">
    <citation type="journal article" date="2014" name="Nat. Commun.">
        <title>Kinetochores require oligomerization of Dam1 complex to maintain microtubule attachments against tension and promote biorientation.</title>
        <authorList>
            <person name="Umbreit N.T."/>
            <person name="Miller M.P."/>
            <person name="Tien J.F."/>
            <person name="Ortola J.C."/>
            <person name="Gui L."/>
            <person name="Lee K.K."/>
            <person name="Biggins S."/>
            <person name="Asbury C.L."/>
            <person name="Davis T.N."/>
        </authorList>
    </citation>
    <scope>FUNCTION</scope>
    <scope>IDENTIFICATION IN THE DASH COMPLEX</scope>
</reference>
<reference key="19">
    <citation type="journal article" date="2023" name="Cell Rep.">
        <title>Single-copy locus proteomics of early- and late-firing DNA replication origins identifies a role of Ask1/DASH complex in replication timing control.</title>
        <authorList>
            <person name="Weibeta M."/>
            <person name="Chanou A."/>
            <person name="Schauer T."/>
            <person name="Tvardovskiy A."/>
            <person name="Meiser S."/>
            <person name="Koenig A.C."/>
            <person name="Schmidt T."/>
            <person name="Kruse E."/>
            <person name="Ummethum H."/>
            <person name="Trauner M."/>
            <person name="Werner M."/>
            <person name="Lalonde M."/>
            <person name="Hauck S.M."/>
            <person name="Scialdone A."/>
            <person name="Hamperl S."/>
        </authorList>
    </citation>
    <scope>FUNCTION</scope>
    <scope>SUBCELLULAR LOCATION</scope>
</reference>
<reference key="20">
    <citation type="journal article" date="2005" name="Nat. Struct. Mol. Biol.">
        <title>The yeast DASH complex forms closed rings on microtubules.</title>
        <authorList>
            <person name="Miranda J.L."/>
            <person name="Wulf P.D."/>
            <person name="Sorger P.K."/>
            <person name="Harrison S.C."/>
        </authorList>
    </citation>
    <scope>ELECTRON MICROSCOPY OF DASH COMPLEX ALONE AND BOUND TO MICROTUBULES</scope>
    <scope>FUNCTION</scope>
    <scope>IDENTIFICATION IN THE DASH COMPLEX</scope>
</reference>
<reference key="21">
    <citation type="journal article" date="2007" name="Nat. Struct. Mol. Biol.">
        <title>Architecture of the Dam1 kinetochore ring complex and implications for microtubule-driven assembly and force-coupling mechanisms.</title>
        <authorList>
            <person name="Wang H.W."/>
            <person name="Ramey V.H."/>
            <person name="Westermann S."/>
            <person name="Leschziner A.E."/>
            <person name="Welburn J.P."/>
            <person name="Nakajima Y."/>
            <person name="Drubin D.G."/>
            <person name="Barnes G."/>
            <person name="Nogales E."/>
        </authorList>
    </citation>
    <scope>ELECTRON MICROSCOPY OF DASH COMPLEX</scope>
    <scope>FUNCTION</scope>
    <scope>IDENTIFICATION IN THE DASH COMPLEX</scope>
    <scope>SUBUNIT</scope>
</reference>
<dbReference type="EMBL" id="Z27116">
    <property type="protein sequence ID" value="CAA81634.1"/>
    <property type="molecule type" value="Genomic_DNA"/>
</dbReference>
<dbReference type="EMBL" id="Z28308">
    <property type="protein sequence ID" value="CAA82162.1"/>
    <property type="molecule type" value="Genomic_DNA"/>
</dbReference>
<dbReference type="EMBL" id="AY558397">
    <property type="protein sequence ID" value="AAS56723.1"/>
    <property type="molecule type" value="Genomic_DNA"/>
</dbReference>
<dbReference type="EMBL" id="BK006944">
    <property type="protein sequence ID" value="DAA09233.1"/>
    <property type="molecule type" value="Genomic_DNA"/>
</dbReference>
<dbReference type="PIR" id="S38161">
    <property type="entry name" value="S38161"/>
</dbReference>
<dbReference type="RefSeq" id="NP_013009.1">
    <property type="nucleotide sequence ID" value="NM_001179873.1"/>
</dbReference>
<dbReference type="PDB" id="8Q84">
    <property type="method" value="EM"/>
    <property type="resolution" value="3.15 A"/>
    <property type="chains" value="K/W=1-133"/>
</dbReference>
<dbReference type="PDB" id="8Q85">
    <property type="method" value="EM"/>
    <property type="resolution" value="3.97 A"/>
    <property type="chains" value="W=1-133"/>
</dbReference>
<dbReference type="PDBsum" id="8Q84"/>
<dbReference type="PDBsum" id="8Q85"/>
<dbReference type="EMDB" id="EMD-18246"/>
<dbReference type="EMDB" id="EMD-18247"/>
<dbReference type="SMR" id="P36162"/>
<dbReference type="BioGRID" id="34214">
    <property type="interactions" value="221"/>
</dbReference>
<dbReference type="ComplexPortal" id="CPX-1041">
    <property type="entry name" value="DASH complex"/>
</dbReference>
<dbReference type="DIP" id="DIP-1927N"/>
<dbReference type="FunCoup" id="P36162">
    <property type="interactions" value="57"/>
</dbReference>
<dbReference type="IntAct" id="P36162">
    <property type="interactions" value="10"/>
</dbReference>
<dbReference type="MINT" id="P36162"/>
<dbReference type="STRING" id="4932.YKR083C"/>
<dbReference type="iPTMnet" id="P36162"/>
<dbReference type="PaxDb" id="4932-YKR083C"/>
<dbReference type="PeptideAtlas" id="P36162"/>
<dbReference type="EnsemblFungi" id="YKR083C_mRNA">
    <property type="protein sequence ID" value="YKR083C"/>
    <property type="gene ID" value="YKR083C"/>
</dbReference>
<dbReference type="GeneID" id="853958"/>
<dbReference type="KEGG" id="sce:YKR083C"/>
<dbReference type="AGR" id="SGD:S000001791"/>
<dbReference type="SGD" id="S000001791">
    <property type="gene designation" value="DAD2"/>
</dbReference>
<dbReference type="VEuPathDB" id="FungiDB:YKR083C"/>
<dbReference type="eggNOG" id="ENOG502S93M">
    <property type="taxonomic scope" value="Eukaryota"/>
</dbReference>
<dbReference type="HOGENOM" id="CLU_138063_1_0_1"/>
<dbReference type="InParanoid" id="P36162"/>
<dbReference type="OMA" id="DYEVGVW"/>
<dbReference type="OrthoDB" id="3230169at2759"/>
<dbReference type="BioCyc" id="YEAST:G3O-32046-MONOMER"/>
<dbReference type="BioGRID-ORCS" id="853958">
    <property type="hits" value="1 hit in 10 CRISPR screens"/>
</dbReference>
<dbReference type="PRO" id="PR:P36162"/>
<dbReference type="Proteomes" id="UP000002311">
    <property type="component" value="Chromosome XI"/>
</dbReference>
<dbReference type="RNAct" id="P36162">
    <property type="molecule type" value="protein"/>
</dbReference>
<dbReference type="GO" id="GO:0005737">
    <property type="term" value="C:cytoplasm"/>
    <property type="evidence" value="ECO:0007669"/>
    <property type="project" value="UniProtKB-KW"/>
</dbReference>
<dbReference type="GO" id="GO:0042729">
    <property type="term" value="C:DASH complex"/>
    <property type="evidence" value="ECO:0000314"/>
    <property type="project" value="SGD"/>
</dbReference>
<dbReference type="GO" id="GO:0005874">
    <property type="term" value="C:microtubule"/>
    <property type="evidence" value="ECO:0007669"/>
    <property type="project" value="UniProtKB-KW"/>
</dbReference>
<dbReference type="GO" id="GO:0072686">
    <property type="term" value="C:mitotic spindle"/>
    <property type="evidence" value="ECO:0000303"/>
    <property type="project" value="ComplexPortal"/>
</dbReference>
<dbReference type="GO" id="GO:1990023">
    <property type="term" value="C:mitotic spindle midzone"/>
    <property type="evidence" value="ECO:0000318"/>
    <property type="project" value="GO_Central"/>
</dbReference>
<dbReference type="GO" id="GO:0044732">
    <property type="term" value="C:mitotic spindle pole body"/>
    <property type="evidence" value="ECO:0000318"/>
    <property type="project" value="GO_Central"/>
</dbReference>
<dbReference type="GO" id="GO:0008608">
    <property type="term" value="P:attachment of spindle microtubules to kinetochore"/>
    <property type="evidence" value="ECO:0000314"/>
    <property type="project" value="SGD"/>
</dbReference>
<dbReference type="GO" id="GO:0051301">
    <property type="term" value="P:cell division"/>
    <property type="evidence" value="ECO:0007669"/>
    <property type="project" value="UniProtKB-KW"/>
</dbReference>
<dbReference type="GO" id="GO:1990758">
    <property type="term" value="P:mitotic sister chromatid biorientation"/>
    <property type="evidence" value="ECO:0000314"/>
    <property type="project" value="ComplexPortal"/>
</dbReference>
<dbReference type="GO" id="GO:0051987">
    <property type="term" value="P:positive regulation of attachment of spindle microtubules to kinetochore"/>
    <property type="evidence" value="ECO:0000314"/>
    <property type="project" value="ComplexPortal"/>
</dbReference>
<dbReference type="GO" id="GO:0031116">
    <property type="term" value="P:positive regulation of microtubule polymerization"/>
    <property type="evidence" value="ECO:0000314"/>
    <property type="project" value="SGD"/>
</dbReference>
<dbReference type="GO" id="GO:1990976">
    <property type="term" value="P:protein transport along microtubule to mitotic spindle pole body"/>
    <property type="evidence" value="ECO:0000315"/>
    <property type="project" value="UniProtKB"/>
</dbReference>
<dbReference type="InterPro" id="IPR013963">
    <property type="entry name" value="DASH_Dad2"/>
</dbReference>
<dbReference type="PANTHER" id="PTHR28036">
    <property type="entry name" value="DASH COMPLEX SUBUNIT DAD2"/>
    <property type="match status" value="1"/>
</dbReference>
<dbReference type="PANTHER" id="PTHR28036:SF1">
    <property type="entry name" value="DASH COMPLEX SUBUNIT DAD2"/>
    <property type="match status" value="1"/>
</dbReference>
<dbReference type="Pfam" id="PF08654">
    <property type="entry name" value="DASH_Dad2"/>
    <property type="match status" value="1"/>
</dbReference>
<feature type="chain" id="PRO_0000211598" description="DASH complex subunit DAD2">
    <location>
        <begin position="1"/>
        <end position="133"/>
    </location>
</feature>
<feature type="region of interest" description="Disordered" evidence="3">
    <location>
        <begin position="81"/>
        <end position="133"/>
    </location>
</feature>
<feature type="coiled-coil region" evidence="2">
    <location>
        <begin position="1"/>
        <end position="51"/>
    </location>
</feature>
<feature type="compositionally biased region" description="Basic and acidic residues" evidence="3">
    <location>
        <begin position="82"/>
        <end position="92"/>
    </location>
</feature>
<feature type="compositionally biased region" description="Acidic residues" evidence="3">
    <location>
        <begin position="106"/>
        <end position="117"/>
    </location>
</feature>
<feature type="modified residue" description="N-acetylmethionine" evidence="21">
    <location>
        <position position="1"/>
    </location>
</feature>
<gene>
    <name type="primary">DAD2</name>
    <name type="synonym">HSK1</name>
    <name type="ordered locus">YKR083C</name>
    <name type="ORF">YKR403</name>
</gene>
<sequence length="133" mass="15072">MDSIDEQIAIKRKELQSLQKITSLTDGLKIQLTELNEQIKEMGMNADSVAQLMNNWDSIINNISQASLGLLQYAEGDYEIGPWKDSKKKESEQSNETGLEAQENDKNDEDNDEDEDLVPLPETMVRIRVDGNE</sequence>
<protein>
    <recommendedName>
        <fullName>DASH complex subunit DAD2</fullName>
    </recommendedName>
    <alternativeName>
        <fullName>DUO1 and DAM1-interacting protein 2</fullName>
    </alternativeName>
    <alternativeName>
        <fullName>Helper of ASK1 protein 1</fullName>
    </alternativeName>
    <alternativeName>
        <fullName>Outer kinetochore protein DAD2</fullName>
    </alternativeName>
</protein>
<organism>
    <name type="scientific">Saccharomyces cerevisiae (strain ATCC 204508 / S288c)</name>
    <name type="common">Baker's yeast</name>
    <dbReference type="NCBI Taxonomy" id="559292"/>
    <lineage>
        <taxon>Eukaryota</taxon>
        <taxon>Fungi</taxon>
        <taxon>Dikarya</taxon>
        <taxon>Ascomycota</taxon>
        <taxon>Saccharomycotina</taxon>
        <taxon>Saccharomycetes</taxon>
        <taxon>Saccharomycetales</taxon>
        <taxon>Saccharomycetaceae</taxon>
        <taxon>Saccharomyces</taxon>
    </lineage>
</organism>
<proteinExistence type="evidence at protein level"/>
<name>DAD2_YEAST</name>